<sequence length="37" mass="4053">MTTFSSFPSIFVPLVGLVFPAIAMASLSLYVQKTKIF</sequence>
<comment type="function">
    <text evidence="1">May help in the organization of the PsaL subunit.</text>
</comment>
<comment type="subcellular location">
    <subcellularLocation>
        <location evidence="1">Plastid</location>
        <location evidence="1">Chloroplast thylakoid membrane</location>
        <topology evidence="1">Single-pass membrane protein</topology>
    </subcellularLocation>
</comment>
<comment type="similarity">
    <text evidence="1">Belongs to the PsaI family.</text>
</comment>
<feature type="chain" id="PRO_0000276022" description="Photosystem I reaction center subunit VIII">
    <location>
        <begin position="1"/>
        <end position="37"/>
    </location>
</feature>
<feature type="transmembrane region" description="Helical" evidence="1">
    <location>
        <begin position="10"/>
        <end position="30"/>
    </location>
</feature>
<name>PSAI_GOSHI</name>
<gene>
    <name evidence="1" type="primary">psaI</name>
</gene>
<protein>
    <recommendedName>
        <fullName evidence="1">Photosystem I reaction center subunit VIII</fullName>
        <shortName evidence="1">PSI-I</shortName>
    </recommendedName>
</protein>
<reference key="1">
    <citation type="journal article" date="2006" name="BMC Genomics">
        <title>The complete chloroplast genome sequence of Gossypium hirsutum: organization and phylogenetic relationships to other angiosperms.</title>
        <authorList>
            <person name="Lee S.-B."/>
            <person name="Kaittanis C."/>
            <person name="Jansen R.K."/>
            <person name="Hostetler J.B."/>
            <person name="Tallon L.J."/>
            <person name="Town C.D."/>
            <person name="Daniell H."/>
        </authorList>
    </citation>
    <scope>NUCLEOTIDE SEQUENCE [LARGE SCALE GENOMIC DNA]</scope>
    <source>
        <strain>cv. Coker 310FR</strain>
    </source>
</reference>
<dbReference type="EMBL" id="DQ345959">
    <property type="protein sequence ID" value="ABC73638.1"/>
    <property type="molecule type" value="Genomic_DNA"/>
</dbReference>
<dbReference type="RefSeq" id="YP_538945.1">
    <property type="nucleotide sequence ID" value="NC_007944.1"/>
</dbReference>
<dbReference type="SMR" id="Q2L914"/>
<dbReference type="GeneID" id="3989159"/>
<dbReference type="KEGG" id="ghi:3989159"/>
<dbReference type="OrthoDB" id="41618at41938"/>
<dbReference type="Proteomes" id="UP000189702">
    <property type="component" value="Chloroplast Pltd"/>
</dbReference>
<dbReference type="GO" id="GO:0009535">
    <property type="term" value="C:chloroplast thylakoid membrane"/>
    <property type="evidence" value="ECO:0007669"/>
    <property type="project" value="UniProtKB-SubCell"/>
</dbReference>
<dbReference type="GO" id="GO:0009522">
    <property type="term" value="C:photosystem I"/>
    <property type="evidence" value="ECO:0007669"/>
    <property type="project" value="UniProtKB-KW"/>
</dbReference>
<dbReference type="GO" id="GO:0015979">
    <property type="term" value="P:photosynthesis"/>
    <property type="evidence" value="ECO:0007669"/>
    <property type="project" value="UniProtKB-UniRule"/>
</dbReference>
<dbReference type="HAMAP" id="MF_00431">
    <property type="entry name" value="PSI_PsaI"/>
    <property type="match status" value="1"/>
</dbReference>
<dbReference type="InterPro" id="IPR001302">
    <property type="entry name" value="PSI_PsaI"/>
</dbReference>
<dbReference type="InterPro" id="IPR036357">
    <property type="entry name" value="PSI_PsaI_sf"/>
</dbReference>
<dbReference type="NCBIfam" id="TIGR03052">
    <property type="entry name" value="PS_I_psaI"/>
    <property type="match status" value="1"/>
</dbReference>
<dbReference type="PANTHER" id="PTHR35775">
    <property type="match status" value="1"/>
</dbReference>
<dbReference type="PANTHER" id="PTHR35775:SF2">
    <property type="entry name" value="PHOTOSYSTEM I REACTION CENTER SUBUNIT VIII"/>
    <property type="match status" value="1"/>
</dbReference>
<dbReference type="Pfam" id="PF00796">
    <property type="entry name" value="PSI_8"/>
    <property type="match status" value="1"/>
</dbReference>
<dbReference type="SUPFAM" id="SSF81540">
    <property type="entry name" value="Subunit VIII of photosystem I reaction centre, PsaI"/>
    <property type="match status" value="1"/>
</dbReference>
<geneLocation type="chloroplast"/>
<proteinExistence type="inferred from homology"/>
<organism>
    <name type="scientific">Gossypium hirsutum</name>
    <name type="common">Upland cotton</name>
    <name type="synonym">Gossypium mexicanum</name>
    <dbReference type="NCBI Taxonomy" id="3635"/>
    <lineage>
        <taxon>Eukaryota</taxon>
        <taxon>Viridiplantae</taxon>
        <taxon>Streptophyta</taxon>
        <taxon>Embryophyta</taxon>
        <taxon>Tracheophyta</taxon>
        <taxon>Spermatophyta</taxon>
        <taxon>Magnoliopsida</taxon>
        <taxon>eudicotyledons</taxon>
        <taxon>Gunneridae</taxon>
        <taxon>Pentapetalae</taxon>
        <taxon>rosids</taxon>
        <taxon>malvids</taxon>
        <taxon>Malvales</taxon>
        <taxon>Malvaceae</taxon>
        <taxon>Malvoideae</taxon>
        <taxon>Gossypium</taxon>
    </lineage>
</organism>
<evidence type="ECO:0000255" key="1">
    <source>
        <dbReference type="HAMAP-Rule" id="MF_00431"/>
    </source>
</evidence>
<accession>Q2L914</accession>
<keyword id="KW-0150">Chloroplast</keyword>
<keyword id="KW-0472">Membrane</keyword>
<keyword id="KW-0602">Photosynthesis</keyword>
<keyword id="KW-0603">Photosystem I</keyword>
<keyword id="KW-0934">Plastid</keyword>
<keyword id="KW-1185">Reference proteome</keyword>
<keyword id="KW-0793">Thylakoid</keyword>
<keyword id="KW-0812">Transmembrane</keyword>
<keyword id="KW-1133">Transmembrane helix</keyword>